<accession>C4KZ66</accession>
<protein>
    <recommendedName>
        <fullName evidence="1">Indole-3-glycerol phosphate synthase</fullName>
        <shortName evidence="1">IGPS</shortName>
        <ecNumber evidence="1">4.1.1.48</ecNumber>
    </recommendedName>
</protein>
<gene>
    <name evidence="1" type="primary">trpC</name>
    <name type="ordered locus">EAT1b_1452</name>
</gene>
<evidence type="ECO:0000255" key="1">
    <source>
        <dbReference type="HAMAP-Rule" id="MF_00134"/>
    </source>
</evidence>
<keyword id="KW-0028">Amino-acid biosynthesis</keyword>
<keyword id="KW-0057">Aromatic amino acid biosynthesis</keyword>
<keyword id="KW-0210">Decarboxylase</keyword>
<keyword id="KW-0456">Lyase</keyword>
<keyword id="KW-0822">Tryptophan biosynthesis</keyword>
<organism>
    <name type="scientific">Exiguobacterium sp. (strain ATCC BAA-1283 / AT1b)</name>
    <dbReference type="NCBI Taxonomy" id="360911"/>
    <lineage>
        <taxon>Bacteria</taxon>
        <taxon>Bacillati</taxon>
        <taxon>Bacillota</taxon>
        <taxon>Bacilli</taxon>
        <taxon>Bacillales</taxon>
        <taxon>Bacillales Family XII. Incertae Sedis</taxon>
        <taxon>Exiguobacterium</taxon>
    </lineage>
</organism>
<reference key="1">
    <citation type="journal article" date="2011" name="J. Bacteriol.">
        <title>Complete genome sequence of the Thermophilic Bacterium Exiguobacterium sp. AT1b.</title>
        <authorList>
            <person name="Vishnivetskaya T.A."/>
            <person name="Lucas S."/>
            <person name="Copeland A."/>
            <person name="Lapidus A."/>
            <person name="Glavina del Rio T."/>
            <person name="Dalin E."/>
            <person name="Tice H."/>
            <person name="Bruce D.C."/>
            <person name="Goodwin L.A."/>
            <person name="Pitluck S."/>
            <person name="Saunders E."/>
            <person name="Brettin T."/>
            <person name="Detter C."/>
            <person name="Han C."/>
            <person name="Larimer F."/>
            <person name="Land M.L."/>
            <person name="Hauser L.J."/>
            <person name="Kyrpides N.C."/>
            <person name="Ovchinnikova G."/>
            <person name="Kathariou S."/>
            <person name="Ramaley R.F."/>
            <person name="Rodrigues D.F."/>
            <person name="Hendrix C."/>
            <person name="Richardson P."/>
            <person name="Tiedje J.M."/>
        </authorList>
    </citation>
    <scope>NUCLEOTIDE SEQUENCE [LARGE SCALE GENOMIC DNA]</scope>
    <source>
        <strain>ATCC BAA-1283 / AT1b</strain>
    </source>
</reference>
<feature type="chain" id="PRO_1000203200" description="Indole-3-glycerol phosphate synthase">
    <location>
        <begin position="1"/>
        <end position="253"/>
    </location>
</feature>
<proteinExistence type="inferred from homology"/>
<dbReference type="EC" id="4.1.1.48" evidence="1"/>
<dbReference type="EMBL" id="CP001615">
    <property type="protein sequence ID" value="ACQ70379.1"/>
    <property type="molecule type" value="Genomic_DNA"/>
</dbReference>
<dbReference type="RefSeq" id="WP_012727498.1">
    <property type="nucleotide sequence ID" value="NC_012673.1"/>
</dbReference>
<dbReference type="SMR" id="C4KZ66"/>
<dbReference type="STRING" id="360911.EAT1b_1452"/>
<dbReference type="KEGG" id="eat:EAT1b_1452"/>
<dbReference type="eggNOG" id="COG0134">
    <property type="taxonomic scope" value="Bacteria"/>
</dbReference>
<dbReference type="HOGENOM" id="CLU_034247_2_1_9"/>
<dbReference type="OrthoDB" id="9804217at2"/>
<dbReference type="UniPathway" id="UPA00035">
    <property type="reaction ID" value="UER00043"/>
</dbReference>
<dbReference type="Proteomes" id="UP000000716">
    <property type="component" value="Chromosome"/>
</dbReference>
<dbReference type="GO" id="GO:0004425">
    <property type="term" value="F:indole-3-glycerol-phosphate synthase activity"/>
    <property type="evidence" value="ECO:0007669"/>
    <property type="project" value="UniProtKB-UniRule"/>
</dbReference>
<dbReference type="GO" id="GO:0004640">
    <property type="term" value="F:phosphoribosylanthranilate isomerase activity"/>
    <property type="evidence" value="ECO:0007669"/>
    <property type="project" value="TreeGrafter"/>
</dbReference>
<dbReference type="GO" id="GO:0000162">
    <property type="term" value="P:L-tryptophan biosynthetic process"/>
    <property type="evidence" value="ECO:0007669"/>
    <property type="project" value="UniProtKB-UniRule"/>
</dbReference>
<dbReference type="CDD" id="cd00331">
    <property type="entry name" value="IGPS"/>
    <property type="match status" value="1"/>
</dbReference>
<dbReference type="FunFam" id="3.20.20.70:FF:000024">
    <property type="entry name" value="Indole-3-glycerol phosphate synthase"/>
    <property type="match status" value="1"/>
</dbReference>
<dbReference type="Gene3D" id="3.20.20.70">
    <property type="entry name" value="Aldolase class I"/>
    <property type="match status" value="1"/>
</dbReference>
<dbReference type="HAMAP" id="MF_00134_A">
    <property type="entry name" value="IGPS_A"/>
    <property type="match status" value="1"/>
</dbReference>
<dbReference type="HAMAP" id="MF_00134_B">
    <property type="entry name" value="IGPS_B"/>
    <property type="match status" value="1"/>
</dbReference>
<dbReference type="InterPro" id="IPR013785">
    <property type="entry name" value="Aldolase_TIM"/>
</dbReference>
<dbReference type="InterPro" id="IPR045186">
    <property type="entry name" value="Indole-3-glycerol_P_synth"/>
</dbReference>
<dbReference type="InterPro" id="IPR013798">
    <property type="entry name" value="Indole-3-glycerol_P_synth_dom"/>
</dbReference>
<dbReference type="InterPro" id="IPR001468">
    <property type="entry name" value="Indole-3-GlycerolPSynthase_CS"/>
</dbReference>
<dbReference type="InterPro" id="IPR011060">
    <property type="entry name" value="RibuloseP-bd_barrel"/>
</dbReference>
<dbReference type="NCBIfam" id="NF001377">
    <property type="entry name" value="PRK00278.2-4"/>
    <property type="match status" value="1"/>
</dbReference>
<dbReference type="PANTHER" id="PTHR22854:SF2">
    <property type="entry name" value="INDOLE-3-GLYCEROL-PHOSPHATE SYNTHASE"/>
    <property type="match status" value="1"/>
</dbReference>
<dbReference type="PANTHER" id="PTHR22854">
    <property type="entry name" value="TRYPTOPHAN BIOSYNTHESIS PROTEIN"/>
    <property type="match status" value="1"/>
</dbReference>
<dbReference type="Pfam" id="PF00218">
    <property type="entry name" value="IGPS"/>
    <property type="match status" value="1"/>
</dbReference>
<dbReference type="SUPFAM" id="SSF51366">
    <property type="entry name" value="Ribulose-phoshate binding barrel"/>
    <property type="match status" value="1"/>
</dbReference>
<dbReference type="PROSITE" id="PS00614">
    <property type="entry name" value="IGPS"/>
    <property type="match status" value="1"/>
</dbReference>
<name>TRPC_EXISA</name>
<sequence length="253" mass="28075">MSYLTKIIGTKIEEVSGMQPIDVPVTKPISLLHVMSEGFHIISEIKRSSPSKGMIRETVDVAKRARQYEKAGATMISVLTDTTYFNGSFDDLRQVADVVTIPVLCKDFIIDERQLDYAKHYGASVALLIVAALHPTRLHELTRYARSIGLDVLVEVHDEAELRIALELDDVLIGINNRDLKTFEVSLETSIDLMKRYPEVTFVSESGVSTVEAAARLQEAGASAILVGEALMREEDPIRLLEELKTCSLKSVD</sequence>
<comment type="catalytic activity">
    <reaction evidence="1">
        <text>1-(2-carboxyphenylamino)-1-deoxy-D-ribulose 5-phosphate + H(+) = (1S,2R)-1-C-(indol-3-yl)glycerol 3-phosphate + CO2 + H2O</text>
        <dbReference type="Rhea" id="RHEA:23476"/>
        <dbReference type="ChEBI" id="CHEBI:15377"/>
        <dbReference type="ChEBI" id="CHEBI:15378"/>
        <dbReference type="ChEBI" id="CHEBI:16526"/>
        <dbReference type="ChEBI" id="CHEBI:58613"/>
        <dbReference type="ChEBI" id="CHEBI:58866"/>
        <dbReference type="EC" id="4.1.1.48"/>
    </reaction>
</comment>
<comment type="pathway">
    <text evidence="1">Amino-acid biosynthesis; L-tryptophan biosynthesis; L-tryptophan from chorismate: step 4/5.</text>
</comment>
<comment type="similarity">
    <text evidence="1">Belongs to the TrpC family.</text>
</comment>